<sequence>MDAIKCSSSFLHHTKLNTLFSNHTFPKISAPNFKPLFRPISISAKDRRSNEAENIAVVEKPLKSDRFFISDGLPSPFGPTVRDDGVNFSVYSTNSVSATICLISLSDLRQNKVTEEIQLDPSRNRTGHVWHVFLRGDFKDMLYGYRFDGKFSPEEGHYYDSSNILLDPYAKAIISRDEFGVLGPDDNCWPQMACMVPTREEEFDWEGDMHLKLPQKDLVIYEMHVRGFTRHESSKIEFPGTYQGVAEKLDHLKELGINCIELMPCHEFNELEYYSYNTILGDHRVNFWGYSTIGFFSPMIRYASASSNNFAGRAINEFKILVKEAHKRGIEVIMDVVLNHTAEGNEKGPIFSFRGVDNSVYYMLAPKGEFYNYSGCGNTFNCNHPVVRQFILDCLRYWVTEMHVDGFRFDLGSIMSRSSSLWDAANVYGADVEGDLLTTGTPISCPPVIDMISNDPILRGVKLIAEAWDAGGLYQVGMFPHWGIWSEWNGKFRDVVRQFIKGTDGFSGAFAECLCGSPNLYQGGRKPWHSINFICAHDGFTLADLVTYNNKNNLANGEENNDGENHNYSWNCGEEGDFASISVKRLRKRQMRNFFVSLMVSQGVPMIYMGDEYGHTKGGNNNTYCHDNYMNYFRWDKKEEAHSDFFRFCRILIKFRDECESLGLNDFPTAKRLQWHGLAPEIPNWSETSRFVAFSLVDSVKKEIYVAFNTSHLATLVSLPNRPGYRWEPFVDTSKPSPYDCITPDLPERETAMKQYRHFLDANVYPMLSYSSIILLLSPIKDP</sequence>
<proteinExistence type="evidence at protein level"/>
<protein>
    <recommendedName>
        <fullName evidence="9">Isoamylase 1, chloroplastic</fullName>
        <shortName evidence="9">AtISA1</shortName>
        <ecNumber>3.2.1.68</ecNumber>
    </recommendedName>
    <alternativeName>
        <fullName evidence="10">Protein REDUCED GRAVITROPIC 3</fullName>
    </alternativeName>
</protein>
<evidence type="ECO:0000250" key="1">
    <source>
        <dbReference type="UniProtKB" id="P04746"/>
    </source>
</evidence>
<evidence type="ECO:0000255" key="2"/>
<evidence type="ECO:0000269" key="3">
    <source>
    </source>
</evidence>
<evidence type="ECO:0000269" key="4">
    <source>
    </source>
</evidence>
<evidence type="ECO:0000269" key="5">
    <source>
    </source>
</evidence>
<evidence type="ECO:0000269" key="6">
    <source>
    </source>
</evidence>
<evidence type="ECO:0000269" key="7">
    <source>
    </source>
</evidence>
<evidence type="ECO:0000269" key="8">
    <source>
    </source>
</evidence>
<evidence type="ECO:0000303" key="9">
    <source>
    </source>
</evidence>
<evidence type="ECO:0000303" key="10">
    <source>
    </source>
</evidence>
<evidence type="ECO:0000305" key="11"/>
<evidence type="ECO:0000312" key="12">
    <source>
        <dbReference type="Araport" id="AT2G39930"/>
    </source>
</evidence>
<evidence type="ECO:0000312" key="13">
    <source>
        <dbReference type="EMBL" id="AAB95278.1"/>
    </source>
</evidence>
<organism>
    <name type="scientific">Arabidopsis thaliana</name>
    <name type="common">Mouse-ear cress</name>
    <dbReference type="NCBI Taxonomy" id="3702"/>
    <lineage>
        <taxon>Eukaryota</taxon>
        <taxon>Viridiplantae</taxon>
        <taxon>Streptophyta</taxon>
        <taxon>Embryophyta</taxon>
        <taxon>Tracheophyta</taxon>
        <taxon>Spermatophyta</taxon>
        <taxon>Magnoliopsida</taxon>
        <taxon>eudicotyledons</taxon>
        <taxon>Gunneridae</taxon>
        <taxon>Pentapetalae</taxon>
        <taxon>rosids</taxon>
        <taxon>malvids</taxon>
        <taxon>Brassicales</taxon>
        <taxon>Brassicaceae</taxon>
        <taxon>Camelineae</taxon>
        <taxon>Arabidopsis</taxon>
    </lineage>
</organism>
<keyword id="KW-0119">Carbohydrate metabolism</keyword>
<keyword id="KW-0150">Chloroplast</keyword>
<keyword id="KW-0326">Glycosidase</keyword>
<keyword id="KW-0378">Hydrolase</keyword>
<keyword id="KW-0934">Plastid</keyword>
<keyword id="KW-1185">Reference proteome</keyword>
<keyword id="KW-0750">Starch biosynthesis</keyword>
<keyword id="KW-0809">Transit peptide</keyword>
<gene>
    <name evidence="9" type="primary">ISA1</name>
    <name evidence="10" type="synonym">RGV3</name>
    <name evidence="12" type="ordered locus">At2g39930</name>
    <name evidence="13" type="ORF">T28M21.9</name>
</gene>
<dbReference type="EC" id="3.2.1.68"/>
<dbReference type="EMBL" id="AF002109">
    <property type="protein sequence ID" value="AAB95278.1"/>
    <property type="molecule type" value="Genomic_DNA"/>
</dbReference>
<dbReference type="EMBL" id="CP002685">
    <property type="protein sequence ID" value="AEC09752.1"/>
    <property type="molecule type" value="Genomic_DNA"/>
</dbReference>
<dbReference type="EMBL" id="BT000443">
    <property type="protein sequence ID" value="AAN17420.1"/>
    <property type="molecule type" value="mRNA"/>
</dbReference>
<dbReference type="EMBL" id="BT010348">
    <property type="protein sequence ID" value="AAQ56791.1"/>
    <property type="molecule type" value="mRNA"/>
</dbReference>
<dbReference type="PIR" id="B84823">
    <property type="entry name" value="B84823"/>
</dbReference>
<dbReference type="RefSeq" id="NP_181522.1">
    <property type="nucleotide sequence ID" value="NM_129551.4"/>
</dbReference>
<dbReference type="SMR" id="O04196"/>
<dbReference type="BioGRID" id="3918">
    <property type="interactions" value="2"/>
</dbReference>
<dbReference type="FunCoup" id="O04196">
    <property type="interactions" value="612"/>
</dbReference>
<dbReference type="IntAct" id="O04196">
    <property type="interactions" value="2"/>
</dbReference>
<dbReference type="STRING" id="3702.O04196"/>
<dbReference type="CAZy" id="CBM48">
    <property type="family name" value="Carbohydrate-Binding Module Family 48"/>
</dbReference>
<dbReference type="CAZy" id="GH13">
    <property type="family name" value="Glycoside Hydrolase Family 13"/>
</dbReference>
<dbReference type="PaxDb" id="3702-AT2G39930.1"/>
<dbReference type="ProteomicsDB" id="232228"/>
<dbReference type="EnsemblPlants" id="AT2G39930.1">
    <property type="protein sequence ID" value="AT2G39930.1"/>
    <property type="gene ID" value="AT2G39930"/>
</dbReference>
<dbReference type="GeneID" id="818580"/>
<dbReference type="Gramene" id="AT2G39930.1">
    <property type="protein sequence ID" value="AT2G39930.1"/>
    <property type="gene ID" value="AT2G39930"/>
</dbReference>
<dbReference type="KEGG" id="ath:AT2G39930"/>
<dbReference type="Araport" id="AT2G39930"/>
<dbReference type="TAIR" id="AT2G39930">
    <property type="gene designation" value="ISA1"/>
</dbReference>
<dbReference type="eggNOG" id="KOG0470">
    <property type="taxonomic scope" value="Eukaryota"/>
</dbReference>
<dbReference type="HOGENOM" id="CLU_011725_1_1_1"/>
<dbReference type="InParanoid" id="O04196"/>
<dbReference type="PhylomeDB" id="O04196"/>
<dbReference type="BioCyc" id="ARA:AT2G39930-MONOMER"/>
<dbReference type="BRENDA" id="3.2.1.68">
    <property type="organism ID" value="399"/>
</dbReference>
<dbReference type="UniPathway" id="UPA00152"/>
<dbReference type="PRO" id="PR:O04196"/>
<dbReference type="Proteomes" id="UP000006548">
    <property type="component" value="Chromosome 2"/>
</dbReference>
<dbReference type="ExpressionAtlas" id="O04196">
    <property type="expression patterns" value="baseline and differential"/>
</dbReference>
<dbReference type="GO" id="GO:0009507">
    <property type="term" value="C:chloroplast"/>
    <property type="evidence" value="ECO:0007005"/>
    <property type="project" value="TAIR"/>
</dbReference>
<dbReference type="GO" id="GO:0010368">
    <property type="term" value="C:chloroplast isoamylase complex"/>
    <property type="evidence" value="ECO:0000314"/>
    <property type="project" value="TAIR"/>
</dbReference>
<dbReference type="GO" id="GO:0019156">
    <property type="term" value="F:isoamylase activity"/>
    <property type="evidence" value="ECO:0000314"/>
    <property type="project" value="TAIR"/>
</dbReference>
<dbReference type="GO" id="GO:0010021">
    <property type="term" value="P:amylopectin biosynthetic process"/>
    <property type="evidence" value="ECO:0000315"/>
    <property type="project" value="TAIR"/>
</dbReference>
<dbReference type="GO" id="GO:0019252">
    <property type="term" value="P:starch biosynthetic process"/>
    <property type="evidence" value="ECO:0007669"/>
    <property type="project" value="UniProtKB-UniPathway"/>
</dbReference>
<dbReference type="GO" id="GO:0005983">
    <property type="term" value="P:starch catabolic process"/>
    <property type="evidence" value="ECO:0007669"/>
    <property type="project" value="EnsemblPlants"/>
</dbReference>
<dbReference type="CDD" id="cd11326">
    <property type="entry name" value="AmyAc_Glg_debranch"/>
    <property type="match status" value="1"/>
</dbReference>
<dbReference type="CDD" id="cd02856">
    <property type="entry name" value="E_set_GDE_Isoamylase_N"/>
    <property type="match status" value="1"/>
</dbReference>
<dbReference type="FunFam" id="3.20.20.80:FF:000054">
    <property type="entry name" value="Glycogen debranching enzyme"/>
    <property type="match status" value="1"/>
</dbReference>
<dbReference type="FunFam" id="2.60.40.10:FF:001593">
    <property type="entry name" value="Isoamylase 1, chloroplastic"/>
    <property type="match status" value="1"/>
</dbReference>
<dbReference type="Gene3D" id="3.20.20.80">
    <property type="entry name" value="Glycosidases"/>
    <property type="match status" value="1"/>
</dbReference>
<dbReference type="Gene3D" id="2.60.40.1180">
    <property type="entry name" value="Golgi alpha-mannosidase II"/>
    <property type="match status" value="1"/>
</dbReference>
<dbReference type="Gene3D" id="2.60.40.10">
    <property type="entry name" value="Immunoglobulins"/>
    <property type="match status" value="1"/>
</dbReference>
<dbReference type="InterPro" id="IPR044505">
    <property type="entry name" value="GlgX_Isoamylase_N_E_set"/>
</dbReference>
<dbReference type="InterPro" id="IPR006047">
    <property type="entry name" value="Glyco_hydro_13_cat_dom"/>
</dbReference>
<dbReference type="InterPro" id="IPR004193">
    <property type="entry name" value="Glyco_hydro_13_N"/>
</dbReference>
<dbReference type="InterPro" id="IPR013780">
    <property type="entry name" value="Glyco_hydro_b"/>
</dbReference>
<dbReference type="InterPro" id="IPR017853">
    <property type="entry name" value="Glycoside_hydrolase_SF"/>
</dbReference>
<dbReference type="InterPro" id="IPR013783">
    <property type="entry name" value="Ig-like_fold"/>
</dbReference>
<dbReference type="InterPro" id="IPR014756">
    <property type="entry name" value="Ig_E-set"/>
</dbReference>
<dbReference type="InterPro" id="IPR048650">
    <property type="entry name" value="ISOA1-3-like_C"/>
</dbReference>
<dbReference type="PANTHER" id="PTHR43002">
    <property type="entry name" value="GLYCOGEN DEBRANCHING ENZYME"/>
    <property type="match status" value="1"/>
</dbReference>
<dbReference type="Pfam" id="PF00128">
    <property type="entry name" value="Alpha-amylase"/>
    <property type="match status" value="1"/>
</dbReference>
<dbReference type="Pfam" id="PF02922">
    <property type="entry name" value="CBM_48"/>
    <property type="match status" value="1"/>
</dbReference>
<dbReference type="Pfam" id="PF21156">
    <property type="entry name" value="ISOA1-3_C"/>
    <property type="match status" value="1"/>
</dbReference>
<dbReference type="SMART" id="SM00642">
    <property type="entry name" value="Aamy"/>
    <property type="match status" value="1"/>
</dbReference>
<dbReference type="SUPFAM" id="SSF51445">
    <property type="entry name" value="(Trans)glycosidases"/>
    <property type="match status" value="1"/>
</dbReference>
<dbReference type="SUPFAM" id="SSF81296">
    <property type="entry name" value="E set domains"/>
    <property type="match status" value="1"/>
</dbReference>
<dbReference type="SUPFAM" id="SSF51011">
    <property type="entry name" value="Glycosyl hydrolase domain"/>
    <property type="match status" value="1"/>
</dbReference>
<name>ISOA1_ARATH</name>
<feature type="transit peptide" description="Chloroplast" evidence="2">
    <location>
        <begin position="1"/>
        <end position="43"/>
    </location>
</feature>
<feature type="chain" id="PRO_0000379527" description="Isoamylase 1, chloroplastic">
    <location>
        <begin position="44"/>
        <end position="783"/>
    </location>
</feature>
<feature type="active site" description="Nucleophile" evidence="1">
    <location>
        <position position="410"/>
    </location>
</feature>
<feature type="active site" description="Proton donor" evidence="1">
    <location>
        <position position="466"/>
    </location>
</feature>
<feature type="site" description="Transition state stabilizer" evidence="1">
    <location>
        <position position="538"/>
    </location>
</feature>
<reference key="1">
    <citation type="journal article" date="1999" name="Nature">
        <title>Sequence and analysis of chromosome 2 of the plant Arabidopsis thaliana.</title>
        <authorList>
            <person name="Lin X."/>
            <person name="Kaul S."/>
            <person name="Rounsley S.D."/>
            <person name="Shea T.P."/>
            <person name="Benito M.-I."/>
            <person name="Town C.D."/>
            <person name="Fujii C.Y."/>
            <person name="Mason T.M."/>
            <person name="Bowman C.L."/>
            <person name="Barnstead M.E."/>
            <person name="Feldblyum T.V."/>
            <person name="Buell C.R."/>
            <person name="Ketchum K.A."/>
            <person name="Lee J.J."/>
            <person name="Ronning C.M."/>
            <person name="Koo H.L."/>
            <person name="Moffat K.S."/>
            <person name="Cronin L.A."/>
            <person name="Shen M."/>
            <person name="Pai G."/>
            <person name="Van Aken S."/>
            <person name="Umayam L."/>
            <person name="Tallon L.J."/>
            <person name="Gill J.E."/>
            <person name="Adams M.D."/>
            <person name="Carrera A.J."/>
            <person name="Creasy T.H."/>
            <person name="Goodman H.M."/>
            <person name="Somerville C.R."/>
            <person name="Copenhaver G.P."/>
            <person name="Preuss D."/>
            <person name="Nierman W.C."/>
            <person name="White O."/>
            <person name="Eisen J.A."/>
            <person name="Salzberg S.L."/>
            <person name="Fraser C.M."/>
            <person name="Venter J.C."/>
        </authorList>
    </citation>
    <scope>NUCLEOTIDE SEQUENCE [LARGE SCALE GENOMIC DNA]</scope>
    <source>
        <strain>cv. Columbia</strain>
    </source>
</reference>
<reference key="2">
    <citation type="journal article" date="2017" name="Plant J.">
        <title>Araport11: a complete reannotation of the Arabidopsis thaliana reference genome.</title>
        <authorList>
            <person name="Cheng C.Y."/>
            <person name="Krishnakumar V."/>
            <person name="Chan A.P."/>
            <person name="Thibaud-Nissen F."/>
            <person name="Schobel S."/>
            <person name="Town C.D."/>
        </authorList>
    </citation>
    <scope>GENOME REANNOTATION</scope>
    <source>
        <strain>cv. Columbia</strain>
    </source>
</reference>
<reference key="3">
    <citation type="journal article" date="2003" name="Science">
        <title>Empirical analysis of transcriptional activity in the Arabidopsis genome.</title>
        <authorList>
            <person name="Yamada K."/>
            <person name="Lim J."/>
            <person name="Dale J.M."/>
            <person name="Chen H."/>
            <person name="Shinn P."/>
            <person name="Palm C.J."/>
            <person name="Southwick A.M."/>
            <person name="Wu H.C."/>
            <person name="Kim C.J."/>
            <person name="Nguyen M."/>
            <person name="Pham P.K."/>
            <person name="Cheuk R.F."/>
            <person name="Karlin-Newmann G."/>
            <person name="Liu S.X."/>
            <person name="Lam B."/>
            <person name="Sakano H."/>
            <person name="Wu T."/>
            <person name="Yu G."/>
            <person name="Miranda M."/>
            <person name="Quach H.L."/>
            <person name="Tripp M."/>
            <person name="Chang C.H."/>
            <person name="Lee J.M."/>
            <person name="Toriumi M.J."/>
            <person name="Chan M.M."/>
            <person name="Tang C.C."/>
            <person name="Onodera C.S."/>
            <person name="Deng J.M."/>
            <person name="Akiyama K."/>
            <person name="Ansari Y."/>
            <person name="Arakawa T."/>
            <person name="Banh J."/>
            <person name="Banno F."/>
            <person name="Bowser L."/>
            <person name="Brooks S.Y."/>
            <person name="Carninci P."/>
            <person name="Chao Q."/>
            <person name="Choy N."/>
            <person name="Enju A."/>
            <person name="Goldsmith A.D."/>
            <person name="Gurjal M."/>
            <person name="Hansen N.F."/>
            <person name="Hayashizaki Y."/>
            <person name="Johnson-Hopson C."/>
            <person name="Hsuan V.W."/>
            <person name="Iida K."/>
            <person name="Karnes M."/>
            <person name="Khan S."/>
            <person name="Koesema E."/>
            <person name="Ishida J."/>
            <person name="Jiang P.X."/>
            <person name="Jones T."/>
            <person name="Kawai J."/>
            <person name="Kamiya A."/>
            <person name="Meyers C."/>
            <person name="Nakajima M."/>
            <person name="Narusaka M."/>
            <person name="Seki M."/>
            <person name="Sakurai T."/>
            <person name="Satou M."/>
            <person name="Tamse R."/>
            <person name="Vaysberg M."/>
            <person name="Wallender E.K."/>
            <person name="Wong C."/>
            <person name="Yamamura Y."/>
            <person name="Yuan S."/>
            <person name="Shinozaki K."/>
            <person name="Davis R.W."/>
            <person name="Theologis A."/>
            <person name="Ecker J.R."/>
        </authorList>
    </citation>
    <scope>NUCLEOTIDE SEQUENCE [LARGE SCALE MRNA]</scope>
    <source>
        <strain>cv. Columbia</strain>
    </source>
</reference>
<reference key="4">
    <citation type="journal article" date="2005" name="Plant J.">
        <title>Arabidopsis mutants Atisa1 and Atisa2 have identical phenotypes and lack the same multimeric isoamylase, which influences the branch point distribution of amylopectin during starch synthesis.</title>
        <authorList>
            <person name="Delatte T."/>
            <person name="Trevisan M."/>
            <person name="Parker M.L."/>
            <person name="Zeeman S.C."/>
        </authorList>
    </citation>
    <scope>FUNCTION</scope>
    <scope>INTERACTION WITH ISA2</scope>
    <scope>DISRUPTION PHENOTYPE</scope>
</reference>
<reference key="5">
    <citation type="journal article" date="2005" name="Plant Physiol.">
        <title>Mutants of Arabidopsis lacking a chloroplastic isoamylase accumulate phytoglycogen and an abnormal form of amylopectin.</title>
        <authorList>
            <person name="Wattebled F."/>
            <person name="Dong Y."/>
            <person name="Dumez S."/>
            <person name="Delvalle D."/>
            <person name="Planchot V."/>
            <person name="Berbezy P."/>
            <person name="Vyas D."/>
            <person name="Colonna P."/>
            <person name="Chatterjee M."/>
            <person name="Ball S."/>
            <person name="D'Hulst C."/>
        </authorList>
    </citation>
    <scope>INTERACTION WITH ISA2</scope>
    <scope>DISRUPTION PHENOTYPE</scope>
</reference>
<reference key="6">
    <citation type="journal article" date="2008" name="PLoS ONE">
        <title>Sorting signals, N-terminal modifications and abundance of the chloroplast proteome.</title>
        <authorList>
            <person name="Zybailov B."/>
            <person name="Rutschow H."/>
            <person name="Friso G."/>
            <person name="Rudella A."/>
            <person name="Emanuelsson O."/>
            <person name="Sun Q."/>
            <person name="van Wijk K.J."/>
        </authorList>
    </citation>
    <scope>IDENTIFICATION BY MASS SPECTROMETRY</scope>
    <scope>SUBCELLULAR LOCATION [LARGE SCALE ANALYSIS]</scope>
</reference>
<reference key="7">
    <citation type="journal article" date="2008" name="Plant Cell">
        <title>Starch granule biosynthesis in Arabidopsis is abolished by removal of all debranching enzymes but restored by the subsequent removal of an endoamylase.</title>
        <authorList>
            <person name="Streb S."/>
            <person name="Delatte T."/>
            <person name="Umhang M."/>
            <person name="Eicke S."/>
            <person name="Schorderet M."/>
            <person name="Reinhardt D."/>
            <person name="Zeeman S.C."/>
        </authorList>
    </citation>
    <scope>FUNCTION</scope>
</reference>
<reference key="8">
    <citation type="journal article" date="2008" name="Plant Physiol.">
        <title>Further evidence for the mandatory nature of polysaccharide debranching for the aggregation of semicrystalline starch and for overlapping functions of debranching enzymes in Arabidopsis leaves.</title>
        <authorList>
            <person name="Wattebled F."/>
            <person name="Planchot V."/>
            <person name="Dong Y."/>
            <person name="Szydlowski N."/>
            <person name="Pontoire B."/>
            <person name="Devin A."/>
            <person name="Ball S."/>
            <person name="D'Hulst C."/>
        </authorList>
    </citation>
    <scope>FUNCTION</scope>
</reference>
<reference key="9">
    <citation type="journal article" date="2021" name="Front. Plant Sci.">
        <title>EARLY STARVATION 1 is a functionally conserved protein promoting gravitropic responses in plants by forming starch granules.</title>
        <authorList>
            <person name="Song K."/>
            <person name="Lee D.-W."/>
            <person name="Kim J."/>
            <person name="Kim J."/>
            <person name="Guim H."/>
            <person name="Kim K."/>
            <person name="Jeon J.-S."/>
            <person name="Choi G."/>
        </authorList>
    </citation>
    <scope>FUNCTION</scope>
    <scope>DISRUPTION PHENOTYPE</scope>
    <scope>NOMENCLATURE</scope>
    <source>
        <strain>cv. Columbia</strain>
    </source>
</reference>
<accession>O04196</accession>
<comment type="function">
    <text evidence="3 6 7 8">Involved in the trimming of pre-amylopectin chains. Accelerates the crystallization of nascent amylopectin molecules during starch synthesis. ISA1 and ISA2 work exclusively together as a multimeric holoenzyme. ISA1-ISA2 removes preferentially branches that are very close to other branches. Promotes negative gravitropic responses in shoots by facilitating starch granules (statoliths) formation in hypocotyls (PubMed:34367195).</text>
</comment>
<comment type="catalytic activity">
    <reaction>
        <text>Hydrolysis of (1-&gt;6)-alpha-D-glucosidic branch linkages in glycogen, amylopectin and their beta-limit dextrins.</text>
        <dbReference type="EC" id="3.2.1.68"/>
    </reaction>
</comment>
<comment type="pathway">
    <text>Glycan biosynthesis; starch biosynthesis.</text>
</comment>
<comment type="subunit">
    <text evidence="3 4">Associates with ISA2 to form the heteromultimeric complex Iso1 required for amylopectin synthesis.</text>
</comment>
<comment type="subcellular location">
    <subcellularLocation>
        <location evidence="5">Plastid</location>
        <location evidence="5">Chloroplast</location>
    </subcellularLocation>
</comment>
<comment type="disruption phenotype">
    <text evidence="3 4 8">Strong reduction of the starch level in leaves, but 50-fold increase of water-soluble polysaccharides. No alteration of the amylase-to-amylopectin ratio (PubMed:15743447, PubMed:15849301). Absence of starch granules in the hypocotyl endodermis associated with reduced hypocotyl negative gravitropism but normal phototropism, and presence of some starch granules in the root columella, leading to axillary branches with wider branch angles (PubMed:34367195).</text>
</comment>
<comment type="miscellaneous">
    <text>In the absence of ISA2, ISA1 may be unstable.</text>
</comment>
<comment type="similarity">
    <text evidence="11">Belongs to the glycosyl hydrolase 13 family.</text>
</comment>